<organism>
    <name type="scientific">Pseudomonas putida (strain GB-1)</name>
    <dbReference type="NCBI Taxonomy" id="76869"/>
    <lineage>
        <taxon>Bacteria</taxon>
        <taxon>Pseudomonadati</taxon>
        <taxon>Pseudomonadota</taxon>
        <taxon>Gammaproteobacteria</taxon>
        <taxon>Pseudomonadales</taxon>
        <taxon>Pseudomonadaceae</taxon>
        <taxon>Pseudomonas</taxon>
    </lineage>
</organism>
<evidence type="ECO:0000255" key="1">
    <source>
        <dbReference type="HAMAP-Rule" id="MF_00564"/>
    </source>
</evidence>
<protein>
    <recommendedName>
        <fullName evidence="1">Ribonuclease PH</fullName>
        <shortName evidence="1">RNase PH</shortName>
        <ecNumber evidence="1">2.7.7.56</ecNumber>
    </recommendedName>
    <alternativeName>
        <fullName evidence="1">tRNA nucleotidyltransferase</fullName>
    </alternativeName>
</protein>
<feature type="chain" id="PRO_1000082298" description="Ribonuclease PH">
    <location>
        <begin position="1"/>
        <end position="240"/>
    </location>
</feature>
<feature type="binding site" evidence="1">
    <location>
        <position position="87"/>
    </location>
    <ligand>
        <name>phosphate</name>
        <dbReference type="ChEBI" id="CHEBI:43474"/>
        <note>substrate</note>
    </ligand>
</feature>
<feature type="binding site" evidence="1">
    <location>
        <begin position="125"/>
        <end position="127"/>
    </location>
    <ligand>
        <name>phosphate</name>
        <dbReference type="ChEBI" id="CHEBI:43474"/>
        <note>substrate</note>
    </ligand>
</feature>
<sequence>MKRPSGRAADQLRSIRITRNYTKHAEGSVLVEFGDTKVICTVSVENGVPRFLKGQGQGWLTAEYGMLPRSTGERNQREASRGKQGGRTLEIQRLIGRSLRAALDMSKLGDITLYVDCDVIQADGGTRTASITGAMVALCDALAVIKKRGGLKAGNPLKHMIAAVSVGMYQGEAVLDLDYPEDSAAETDLNVVMTSAGGFIEVQGTAEGAPFQPEDFNAMLALAQKGMNEIFELQQAALAD</sequence>
<comment type="function">
    <text evidence="1">Phosphorolytic 3'-5' exoribonuclease that plays an important role in tRNA 3'-end maturation. Removes nucleotide residues following the 3'-CCA terminus of tRNAs; can also add nucleotides to the ends of RNA molecules by using nucleoside diphosphates as substrates, but this may not be physiologically important. Probably plays a role in initiation of 16S rRNA degradation (leading to ribosome degradation) during starvation.</text>
</comment>
<comment type="catalytic activity">
    <reaction evidence="1">
        <text>tRNA(n+1) + phosphate = tRNA(n) + a ribonucleoside 5'-diphosphate</text>
        <dbReference type="Rhea" id="RHEA:10628"/>
        <dbReference type="Rhea" id="RHEA-COMP:17343"/>
        <dbReference type="Rhea" id="RHEA-COMP:17344"/>
        <dbReference type="ChEBI" id="CHEBI:43474"/>
        <dbReference type="ChEBI" id="CHEBI:57930"/>
        <dbReference type="ChEBI" id="CHEBI:173114"/>
        <dbReference type="EC" id="2.7.7.56"/>
    </reaction>
</comment>
<comment type="subunit">
    <text evidence="1">Homohexameric ring arranged as a trimer of dimers.</text>
</comment>
<comment type="similarity">
    <text evidence="1">Belongs to the RNase PH family.</text>
</comment>
<gene>
    <name evidence="1" type="primary">rph</name>
    <name type="ordered locus">PputGB1_5342</name>
</gene>
<dbReference type="EC" id="2.7.7.56" evidence="1"/>
<dbReference type="EMBL" id="CP000926">
    <property type="protein sequence ID" value="ABZ01224.1"/>
    <property type="molecule type" value="Genomic_DNA"/>
</dbReference>
<dbReference type="RefSeq" id="WP_012274825.1">
    <property type="nucleotide sequence ID" value="NC_010322.1"/>
</dbReference>
<dbReference type="SMR" id="B0KQ94"/>
<dbReference type="KEGG" id="ppg:PputGB1_5342"/>
<dbReference type="eggNOG" id="COG0689">
    <property type="taxonomic scope" value="Bacteria"/>
</dbReference>
<dbReference type="HOGENOM" id="CLU_050858_0_0_6"/>
<dbReference type="Proteomes" id="UP000002157">
    <property type="component" value="Chromosome"/>
</dbReference>
<dbReference type="GO" id="GO:0000175">
    <property type="term" value="F:3'-5'-RNA exonuclease activity"/>
    <property type="evidence" value="ECO:0007669"/>
    <property type="project" value="UniProtKB-UniRule"/>
</dbReference>
<dbReference type="GO" id="GO:0000049">
    <property type="term" value="F:tRNA binding"/>
    <property type="evidence" value="ECO:0007669"/>
    <property type="project" value="UniProtKB-UniRule"/>
</dbReference>
<dbReference type="GO" id="GO:0009022">
    <property type="term" value="F:tRNA nucleotidyltransferase activity"/>
    <property type="evidence" value="ECO:0007669"/>
    <property type="project" value="UniProtKB-UniRule"/>
</dbReference>
<dbReference type="GO" id="GO:0016075">
    <property type="term" value="P:rRNA catabolic process"/>
    <property type="evidence" value="ECO:0007669"/>
    <property type="project" value="UniProtKB-UniRule"/>
</dbReference>
<dbReference type="GO" id="GO:0006364">
    <property type="term" value="P:rRNA processing"/>
    <property type="evidence" value="ECO:0007669"/>
    <property type="project" value="UniProtKB-KW"/>
</dbReference>
<dbReference type="GO" id="GO:0008033">
    <property type="term" value="P:tRNA processing"/>
    <property type="evidence" value="ECO:0007669"/>
    <property type="project" value="UniProtKB-UniRule"/>
</dbReference>
<dbReference type="CDD" id="cd11362">
    <property type="entry name" value="RNase_PH_bact"/>
    <property type="match status" value="1"/>
</dbReference>
<dbReference type="FunFam" id="3.30.230.70:FF:000003">
    <property type="entry name" value="Ribonuclease PH"/>
    <property type="match status" value="1"/>
</dbReference>
<dbReference type="Gene3D" id="3.30.230.70">
    <property type="entry name" value="GHMP Kinase, N-terminal domain"/>
    <property type="match status" value="1"/>
</dbReference>
<dbReference type="HAMAP" id="MF_00564">
    <property type="entry name" value="RNase_PH"/>
    <property type="match status" value="1"/>
</dbReference>
<dbReference type="InterPro" id="IPR001247">
    <property type="entry name" value="ExoRNase_PH_dom1"/>
</dbReference>
<dbReference type="InterPro" id="IPR015847">
    <property type="entry name" value="ExoRNase_PH_dom2"/>
</dbReference>
<dbReference type="InterPro" id="IPR036345">
    <property type="entry name" value="ExoRNase_PH_dom2_sf"/>
</dbReference>
<dbReference type="InterPro" id="IPR027408">
    <property type="entry name" value="PNPase/RNase_PH_dom_sf"/>
</dbReference>
<dbReference type="InterPro" id="IPR020568">
    <property type="entry name" value="Ribosomal_Su5_D2-typ_SF"/>
</dbReference>
<dbReference type="InterPro" id="IPR050080">
    <property type="entry name" value="RNase_PH"/>
</dbReference>
<dbReference type="InterPro" id="IPR002381">
    <property type="entry name" value="RNase_PH_bac-type"/>
</dbReference>
<dbReference type="InterPro" id="IPR018336">
    <property type="entry name" value="RNase_PH_CS"/>
</dbReference>
<dbReference type="NCBIfam" id="TIGR01966">
    <property type="entry name" value="RNasePH"/>
    <property type="match status" value="1"/>
</dbReference>
<dbReference type="PANTHER" id="PTHR11953">
    <property type="entry name" value="EXOSOME COMPLEX COMPONENT"/>
    <property type="match status" value="1"/>
</dbReference>
<dbReference type="PANTHER" id="PTHR11953:SF0">
    <property type="entry name" value="EXOSOME COMPLEX COMPONENT RRP41"/>
    <property type="match status" value="1"/>
</dbReference>
<dbReference type="Pfam" id="PF01138">
    <property type="entry name" value="RNase_PH"/>
    <property type="match status" value="1"/>
</dbReference>
<dbReference type="Pfam" id="PF03725">
    <property type="entry name" value="RNase_PH_C"/>
    <property type="match status" value="1"/>
</dbReference>
<dbReference type="SUPFAM" id="SSF55666">
    <property type="entry name" value="Ribonuclease PH domain 2-like"/>
    <property type="match status" value="1"/>
</dbReference>
<dbReference type="SUPFAM" id="SSF54211">
    <property type="entry name" value="Ribosomal protein S5 domain 2-like"/>
    <property type="match status" value="1"/>
</dbReference>
<dbReference type="PROSITE" id="PS01277">
    <property type="entry name" value="RIBONUCLEASE_PH"/>
    <property type="match status" value="1"/>
</dbReference>
<name>RNPH_PSEPG</name>
<keyword id="KW-0548">Nucleotidyltransferase</keyword>
<keyword id="KW-0694">RNA-binding</keyword>
<keyword id="KW-0698">rRNA processing</keyword>
<keyword id="KW-0808">Transferase</keyword>
<keyword id="KW-0819">tRNA processing</keyword>
<keyword id="KW-0820">tRNA-binding</keyword>
<accession>B0KQ94</accession>
<proteinExistence type="inferred from homology"/>
<reference key="1">
    <citation type="submission" date="2008-01" db="EMBL/GenBank/DDBJ databases">
        <title>Complete sequence of Pseudomonas putida GB-1.</title>
        <authorList>
            <consortium name="US DOE Joint Genome Institute"/>
            <person name="Copeland A."/>
            <person name="Lucas S."/>
            <person name="Lapidus A."/>
            <person name="Barry K."/>
            <person name="Glavina del Rio T."/>
            <person name="Dalin E."/>
            <person name="Tice H."/>
            <person name="Pitluck S."/>
            <person name="Bruce D."/>
            <person name="Goodwin L."/>
            <person name="Chertkov O."/>
            <person name="Brettin T."/>
            <person name="Detter J.C."/>
            <person name="Han C."/>
            <person name="Kuske C.R."/>
            <person name="Schmutz J."/>
            <person name="Larimer F."/>
            <person name="Land M."/>
            <person name="Hauser L."/>
            <person name="Kyrpides N."/>
            <person name="Kim E."/>
            <person name="McCarthy J.K."/>
            <person name="Richardson P."/>
        </authorList>
    </citation>
    <scope>NUCLEOTIDE SEQUENCE [LARGE SCALE GENOMIC DNA]</scope>
    <source>
        <strain>GB-1</strain>
    </source>
</reference>